<sequence>MLKFTLHKKDGYARRGTLELNHGKIETPVFMPVGTYGSVKAMNPQNLHDIKAQIILGNTYHLWLRPGLEVVEQFGGLHGFIGWDKPILTDSGGFQVFSLSDMRKLTEEGCTFKSPINGDKLFLSPEISMKIQTVLNSDIAMQLDECTPGEATREQAKKSLQMSLRWAERSKKAFEDLKNPNALFGIVQGAMYEDLREESLRGLEQFDFPGLAVGGLSVGEPKPEMYRMLRAVGPILPEHKPHYLMGVGTPEDLVYGVAHGIDMFDCVMPTRNARNGWLFTRFGDLKIKNAKHKLDKRPIDESCTCYACQNFSRAYLHHLHRTGEILGAQLNTIHNLHFYQVIMAEMREAVEQGKFADWQARFHENRARGTD</sequence>
<protein>
    <recommendedName>
        <fullName evidence="1">Queuine tRNA-ribosyltransferase</fullName>
        <ecNumber evidence="1">2.4.2.29</ecNumber>
    </recommendedName>
    <alternativeName>
        <fullName evidence="1">Guanine insertion enzyme</fullName>
    </alternativeName>
    <alternativeName>
        <fullName evidence="1">tRNA-guanine transglycosylase</fullName>
    </alternativeName>
</protein>
<proteinExistence type="inferred from homology"/>
<gene>
    <name evidence="1" type="primary">tgt</name>
    <name type="ordered locus">NMC0671</name>
</gene>
<organism>
    <name type="scientific">Neisseria meningitidis serogroup C / serotype 2a (strain ATCC 700532 / DSM 15464 / FAM18)</name>
    <dbReference type="NCBI Taxonomy" id="272831"/>
    <lineage>
        <taxon>Bacteria</taxon>
        <taxon>Pseudomonadati</taxon>
        <taxon>Pseudomonadota</taxon>
        <taxon>Betaproteobacteria</taxon>
        <taxon>Neisseriales</taxon>
        <taxon>Neisseriaceae</taxon>
        <taxon>Neisseria</taxon>
    </lineage>
</organism>
<comment type="function">
    <text evidence="1">Catalyzes the base-exchange of a guanine (G) residue with the queuine precursor 7-aminomethyl-7-deazaguanine (PreQ1) at position 34 (anticodon wobble position) in tRNAs with GU(N) anticodons (tRNA-Asp, -Asn, -His and -Tyr). Catalysis occurs through a double-displacement mechanism. The nucleophile active site attacks the C1' of nucleotide 34 to detach the guanine base from the RNA, forming a covalent enzyme-RNA intermediate. The proton acceptor active site deprotonates the incoming PreQ1, allowing a nucleophilic attack on the C1' of the ribose to form the product. After dissociation, two additional enzymatic reactions on the tRNA convert PreQ1 to queuine (Q), resulting in the hypermodified nucleoside queuosine (7-(((4,5-cis-dihydroxy-2-cyclopenten-1-yl)amino)methyl)-7-deazaguanosine).</text>
</comment>
<comment type="catalytic activity">
    <reaction evidence="1">
        <text>7-aminomethyl-7-carbaguanine + guanosine(34) in tRNA = 7-aminomethyl-7-carbaguanosine(34) in tRNA + guanine</text>
        <dbReference type="Rhea" id="RHEA:24104"/>
        <dbReference type="Rhea" id="RHEA-COMP:10341"/>
        <dbReference type="Rhea" id="RHEA-COMP:10342"/>
        <dbReference type="ChEBI" id="CHEBI:16235"/>
        <dbReference type="ChEBI" id="CHEBI:58703"/>
        <dbReference type="ChEBI" id="CHEBI:74269"/>
        <dbReference type="ChEBI" id="CHEBI:82833"/>
        <dbReference type="EC" id="2.4.2.29"/>
    </reaction>
</comment>
<comment type="cofactor">
    <cofactor evidence="1">
        <name>Zn(2+)</name>
        <dbReference type="ChEBI" id="CHEBI:29105"/>
    </cofactor>
    <text evidence="1">Binds 1 zinc ion per subunit.</text>
</comment>
<comment type="pathway">
    <text evidence="1">tRNA modification; tRNA-queuosine biosynthesis.</text>
</comment>
<comment type="subunit">
    <text evidence="1">Homodimer. Within each dimer, one monomer is responsible for RNA recognition and catalysis, while the other monomer binds to the replacement base PreQ1.</text>
</comment>
<comment type="similarity">
    <text evidence="1">Belongs to the queuine tRNA-ribosyltransferase family.</text>
</comment>
<name>TGT_NEIMF</name>
<keyword id="KW-0328">Glycosyltransferase</keyword>
<keyword id="KW-0479">Metal-binding</keyword>
<keyword id="KW-0671">Queuosine biosynthesis</keyword>
<keyword id="KW-0808">Transferase</keyword>
<keyword id="KW-0819">tRNA processing</keyword>
<keyword id="KW-0862">Zinc</keyword>
<dbReference type="EC" id="2.4.2.29" evidence="1"/>
<dbReference type="EMBL" id="AM421808">
    <property type="protein sequence ID" value="CAM09962.1"/>
    <property type="molecule type" value="Genomic_DNA"/>
</dbReference>
<dbReference type="RefSeq" id="WP_002221244.1">
    <property type="nucleotide sequence ID" value="NC_008767.1"/>
</dbReference>
<dbReference type="SMR" id="A1KSY1"/>
<dbReference type="KEGG" id="nmc:NMC0671"/>
<dbReference type="HOGENOM" id="CLU_022060_0_1_4"/>
<dbReference type="UniPathway" id="UPA00392"/>
<dbReference type="Proteomes" id="UP000002286">
    <property type="component" value="Chromosome"/>
</dbReference>
<dbReference type="GO" id="GO:0005829">
    <property type="term" value="C:cytosol"/>
    <property type="evidence" value="ECO:0007669"/>
    <property type="project" value="TreeGrafter"/>
</dbReference>
<dbReference type="GO" id="GO:0046872">
    <property type="term" value="F:metal ion binding"/>
    <property type="evidence" value="ECO:0007669"/>
    <property type="project" value="UniProtKB-KW"/>
</dbReference>
<dbReference type="GO" id="GO:0008479">
    <property type="term" value="F:tRNA-guanosine(34) queuine transglycosylase activity"/>
    <property type="evidence" value="ECO:0007669"/>
    <property type="project" value="UniProtKB-UniRule"/>
</dbReference>
<dbReference type="GO" id="GO:0008616">
    <property type="term" value="P:queuosine biosynthetic process"/>
    <property type="evidence" value="ECO:0007669"/>
    <property type="project" value="UniProtKB-UniRule"/>
</dbReference>
<dbReference type="GO" id="GO:0002099">
    <property type="term" value="P:tRNA wobble guanine modification"/>
    <property type="evidence" value="ECO:0007669"/>
    <property type="project" value="TreeGrafter"/>
</dbReference>
<dbReference type="GO" id="GO:0101030">
    <property type="term" value="P:tRNA-guanine transglycosylation"/>
    <property type="evidence" value="ECO:0007669"/>
    <property type="project" value="InterPro"/>
</dbReference>
<dbReference type="FunFam" id="3.20.20.105:FF:000001">
    <property type="entry name" value="Queuine tRNA-ribosyltransferase"/>
    <property type="match status" value="1"/>
</dbReference>
<dbReference type="Gene3D" id="3.20.20.105">
    <property type="entry name" value="Queuine tRNA-ribosyltransferase-like"/>
    <property type="match status" value="1"/>
</dbReference>
<dbReference type="HAMAP" id="MF_00168">
    <property type="entry name" value="Q_tRNA_Tgt"/>
    <property type="match status" value="1"/>
</dbReference>
<dbReference type="InterPro" id="IPR050076">
    <property type="entry name" value="ArchSynthase1/Queuine_TRR"/>
</dbReference>
<dbReference type="InterPro" id="IPR004803">
    <property type="entry name" value="TGT"/>
</dbReference>
<dbReference type="InterPro" id="IPR036511">
    <property type="entry name" value="TGT-like_sf"/>
</dbReference>
<dbReference type="InterPro" id="IPR002616">
    <property type="entry name" value="tRNA_ribo_trans-like"/>
</dbReference>
<dbReference type="NCBIfam" id="TIGR00430">
    <property type="entry name" value="Q_tRNA_tgt"/>
    <property type="match status" value="1"/>
</dbReference>
<dbReference type="NCBIfam" id="TIGR00449">
    <property type="entry name" value="tgt_general"/>
    <property type="match status" value="1"/>
</dbReference>
<dbReference type="PANTHER" id="PTHR46499">
    <property type="entry name" value="QUEUINE TRNA-RIBOSYLTRANSFERASE"/>
    <property type="match status" value="1"/>
</dbReference>
<dbReference type="PANTHER" id="PTHR46499:SF1">
    <property type="entry name" value="QUEUINE TRNA-RIBOSYLTRANSFERASE"/>
    <property type="match status" value="1"/>
</dbReference>
<dbReference type="Pfam" id="PF01702">
    <property type="entry name" value="TGT"/>
    <property type="match status" value="1"/>
</dbReference>
<dbReference type="SUPFAM" id="SSF51713">
    <property type="entry name" value="tRNA-guanine transglycosylase"/>
    <property type="match status" value="1"/>
</dbReference>
<evidence type="ECO:0000255" key="1">
    <source>
        <dbReference type="HAMAP-Rule" id="MF_00168"/>
    </source>
</evidence>
<accession>A1KSY1</accession>
<feature type="chain" id="PRO_1000016817" description="Queuine tRNA-ribosyltransferase">
    <location>
        <begin position="1"/>
        <end position="371"/>
    </location>
</feature>
<feature type="region of interest" description="RNA binding" evidence="1">
    <location>
        <begin position="246"/>
        <end position="252"/>
    </location>
</feature>
<feature type="region of interest" description="RNA binding; important for wobble base 34 recognition" evidence="1">
    <location>
        <begin position="270"/>
        <end position="274"/>
    </location>
</feature>
<feature type="active site" description="Proton acceptor" evidence="1">
    <location>
        <position position="90"/>
    </location>
</feature>
<feature type="active site" description="Nucleophile" evidence="1">
    <location>
        <position position="265"/>
    </location>
</feature>
<feature type="binding site" evidence="1">
    <location>
        <begin position="90"/>
        <end position="94"/>
    </location>
    <ligand>
        <name>substrate</name>
    </ligand>
</feature>
<feature type="binding site" evidence="1">
    <location>
        <position position="144"/>
    </location>
    <ligand>
        <name>substrate</name>
    </ligand>
</feature>
<feature type="binding site" evidence="1">
    <location>
        <position position="188"/>
    </location>
    <ligand>
        <name>substrate</name>
    </ligand>
</feature>
<feature type="binding site" evidence="1">
    <location>
        <position position="215"/>
    </location>
    <ligand>
        <name>substrate</name>
    </ligand>
</feature>
<feature type="binding site" evidence="1">
    <location>
        <position position="303"/>
    </location>
    <ligand>
        <name>Zn(2+)</name>
        <dbReference type="ChEBI" id="CHEBI:29105"/>
    </ligand>
</feature>
<feature type="binding site" evidence="1">
    <location>
        <position position="305"/>
    </location>
    <ligand>
        <name>Zn(2+)</name>
        <dbReference type="ChEBI" id="CHEBI:29105"/>
    </ligand>
</feature>
<feature type="binding site" evidence="1">
    <location>
        <position position="308"/>
    </location>
    <ligand>
        <name>Zn(2+)</name>
        <dbReference type="ChEBI" id="CHEBI:29105"/>
    </ligand>
</feature>
<feature type="binding site" evidence="1">
    <location>
        <position position="334"/>
    </location>
    <ligand>
        <name>Zn(2+)</name>
        <dbReference type="ChEBI" id="CHEBI:29105"/>
    </ligand>
</feature>
<reference key="1">
    <citation type="journal article" date="2007" name="PLoS Genet.">
        <title>Meningococcal genetic variation mechanisms viewed through comparative analysis of serogroup C strain FAM18.</title>
        <authorList>
            <person name="Bentley S.D."/>
            <person name="Vernikos G.S."/>
            <person name="Snyder L.A.S."/>
            <person name="Churcher C."/>
            <person name="Arrowsmith C."/>
            <person name="Chillingworth T."/>
            <person name="Cronin A."/>
            <person name="Davis P.H."/>
            <person name="Holroyd N.E."/>
            <person name="Jagels K."/>
            <person name="Maddison M."/>
            <person name="Moule S."/>
            <person name="Rabbinowitsch E."/>
            <person name="Sharp S."/>
            <person name="Unwin L."/>
            <person name="Whitehead S."/>
            <person name="Quail M.A."/>
            <person name="Achtman M."/>
            <person name="Barrell B.G."/>
            <person name="Saunders N.J."/>
            <person name="Parkhill J."/>
        </authorList>
    </citation>
    <scope>NUCLEOTIDE SEQUENCE [LARGE SCALE GENOMIC DNA]</scope>
    <source>
        <strain>ATCC 700532 / DSM 15464 / FAM18</strain>
    </source>
</reference>